<proteinExistence type="inferred from homology"/>
<dbReference type="EC" id="3.1.11.-" evidence="1"/>
<dbReference type="EC" id="3.1.13.-" evidence="1"/>
<dbReference type="EMBL" id="CP002433">
    <property type="protein sequence ID" value="ADU67514.1"/>
    <property type="molecule type" value="Genomic_DNA"/>
</dbReference>
<dbReference type="RefSeq" id="WP_013507383.1">
    <property type="nucleotide sequence ID" value="NC_014837.1"/>
</dbReference>
<dbReference type="SMR" id="E6WHK1"/>
<dbReference type="STRING" id="592316.Pat9b_0188"/>
<dbReference type="KEGG" id="pao:Pat9b_0188"/>
<dbReference type="eggNOG" id="COG0084">
    <property type="taxonomic scope" value="Bacteria"/>
</dbReference>
<dbReference type="HOGENOM" id="CLU_031506_1_2_6"/>
<dbReference type="OrthoDB" id="9810005at2"/>
<dbReference type="Proteomes" id="UP000001624">
    <property type="component" value="Chromosome"/>
</dbReference>
<dbReference type="GO" id="GO:0005737">
    <property type="term" value="C:cytoplasm"/>
    <property type="evidence" value="ECO:0007669"/>
    <property type="project" value="UniProtKB-SubCell"/>
</dbReference>
<dbReference type="GO" id="GO:0000175">
    <property type="term" value="F:3'-5'-RNA exonuclease activity"/>
    <property type="evidence" value="ECO:0007669"/>
    <property type="project" value="UniProtKB-UniRule"/>
</dbReference>
<dbReference type="GO" id="GO:0000287">
    <property type="term" value="F:magnesium ion binding"/>
    <property type="evidence" value="ECO:0007669"/>
    <property type="project" value="UniProtKB-UniRule"/>
</dbReference>
<dbReference type="GO" id="GO:0008310">
    <property type="term" value="F:single-stranded DNA 3'-5' DNA exonuclease activity"/>
    <property type="evidence" value="ECO:0007669"/>
    <property type="project" value="UniProtKB-UniRule"/>
</dbReference>
<dbReference type="CDD" id="cd01310">
    <property type="entry name" value="TatD_DNAse"/>
    <property type="match status" value="1"/>
</dbReference>
<dbReference type="FunFam" id="3.20.20.140:FF:000018">
    <property type="entry name" value="3'-5' ssDNA/RNA exonuclease TatD"/>
    <property type="match status" value="1"/>
</dbReference>
<dbReference type="Gene3D" id="3.20.20.140">
    <property type="entry name" value="Metal-dependent hydrolases"/>
    <property type="match status" value="1"/>
</dbReference>
<dbReference type="HAMAP" id="MF_00901">
    <property type="entry name" value="TatD_exonuclease"/>
    <property type="match status" value="1"/>
</dbReference>
<dbReference type="InterPro" id="IPR018228">
    <property type="entry name" value="DNase_TatD-rel_CS"/>
</dbReference>
<dbReference type="InterPro" id="IPR024918">
    <property type="entry name" value="Exonuc_TatD"/>
</dbReference>
<dbReference type="InterPro" id="IPR032466">
    <property type="entry name" value="Metal_Hydrolase"/>
</dbReference>
<dbReference type="InterPro" id="IPR001130">
    <property type="entry name" value="TatD-like"/>
</dbReference>
<dbReference type="InterPro" id="IPR050891">
    <property type="entry name" value="TatD-type_Hydrolase"/>
</dbReference>
<dbReference type="NCBIfam" id="NF007745">
    <property type="entry name" value="PRK10425.1"/>
    <property type="match status" value="1"/>
</dbReference>
<dbReference type="PANTHER" id="PTHR10060:SF15">
    <property type="entry name" value="DEOXYRIBONUCLEASE TATDN1"/>
    <property type="match status" value="1"/>
</dbReference>
<dbReference type="PANTHER" id="PTHR10060">
    <property type="entry name" value="TATD FAMILY DEOXYRIBONUCLEASE"/>
    <property type="match status" value="1"/>
</dbReference>
<dbReference type="Pfam" id="PF01026">
    <property type="entry name" value="TatD_DNase"/>
    <property type="match status" value="1"/>
</dbReference>
<dbReference type="PIRSF" id="PIRSF005902">
    <property type="entry name" value="DNase_TatD"/>
    <property type="match status" value="1"/>
</dbReference>
<dbReference type="SUPFAM" id="SSF51556">
    <property type="entry name" value="Metallo-dependent hydrolases"/>
    <property type="match status" value="1"/>
</dbReference>
<dbReference type="PROSITE" id="PS01090">
    <property type="entry name" value="TATD_2"/>
    <property type="match status" value="1"/>
</dbReference>
<dbReference type="PROSITE" id="PS01091">
    <property type="entry name" value="TATD_3"/>
    <property type="match status" value="1"/>
</dbReference>
<name>TATD_PANSA</name>
<reference key="1">
    <citation type="submission" date="2010-12" db="EMBL/GenBank/DDBJ databases">
        <title>Complete sequence chromosome of Pantoea sp. At-9b.</title>
        <authorList>
            <consortium name="US DOE Joint Genome Institute"/>
            <person name="Lucas S."/>
            <person name="Copeland A."/>
            <person name="Lapidus A."/>
            <person name="Cheng J.-F."/>
            <person name="Goodwin L."/>
            <person name="Pitluck S."/>
            <person name="Davenport K."/>
            <person name="Detter J.C."/>
            <person name="Han C."/>
            <person name="Tapia R."/>
            <person name="Land M."/>
            <person name="Hauser L."/>
            <person name="Kyrpides N."/>
            <person name="Ivanova N."/>
            <person name="Ovchinnikova G."/>
            <person name="Pinto A."/>
            <person name="Currie C."/>
            <person name="Woyke T."/>
        </authorList>
    </citation>
    <scope>NUCLEOTIDE SEQUENCE [LARGE SCALE GENOMIC DNA]</scope>
    <source>
        <strain>At-9b</strain>
    </source>
</reference>
<gene>
    <name evidence="1" type="primary">tatD</name>
    <name type="ordered locus">Pat9b_0188</name>
</gene>
<comment type="function">
    <text evidence="1">3'-5' exonuclease that prefers single-stranded DNA and RNA. May play a role in the H(2)O(2)-induced DNA damage repair.</text>
</comment>
<comment type="cofactor">
    <cofactor evidence="1">
        <name>Mg(2+)</name>
        <dbReference type="ChEBI" id="CHEBI:18420"/>
    </cofactor>
</comment>
<comment type="subunit">
    <text evidence="1">Monomer.</text>
</comment>
<comment type="subcellular location">
    <subcellularLocation>
        <location evidence="1">Cytoplasm</location>
    </subcellularLocation>
</comment>
<comment type="similarity">
    <text evidence="1">Belongs to the metallo-dependent hydrolases superfamily. TatD-type hydrolase family. TatD subfamily.</text>
</comment>
<accession>E6WHK1</accession>
<sequence length="260" mass="29113">MFDIGVNLTSTQFAKDREQVVARARDAGVTGLLITGTNALESQQAQRLAEWHPGYCWSTAGVHPHHASAWSAETANTLRRLAESEQVVAIGECGLDFNRNFSAHDQQEYAFDAQLQLAAELQLPVFLHCREAHDRFAAILQPWLPKLVGAVAHCFTGTREELEACLAMGLSIGITGWVCDERRGMELRELLPLIPAERLLLETDAPWLLPRDMHPRPTSRRNEPCFLPHIVQQVALWRNEAAETLGAQVDHNARQLFRLA</sequence>
<organism>
    <name type="scientific">Pantoea sp. (strain At-9b)</name>
    <dbReference type="NCBI Taxonomy" id="592316"/>
    <lineage>
        <taxon>Bacteria</taxon>
        <taxon>Pseudomonadati</taxon>
        <taxon>Pseudomonadota</taxon>
        <taxon>Gammaproteobacteria</taxon>
        <taxon>Enterobacterales</taxon>
        <taxon>Erwiniaceae</taxon>
        <taxon>Pantoea</taxon>
    </lineage>
</organism>
<keyword id="KW-0963">Cytoplasm</keyword>
<keyword id="KW-0269">Exonuclease</keyword>
<keyword id="KW-0378">Hydrolase</keyword>
<keyword id="KW-0460">Magnesium</keyword>
<keyword id="KW-0479">Metal-binding</keyword>
<keyword id="KW-0540">Nuclease</keyword>
<protein>
    <recommendedName>
        <fullName evidence="1">3'-5' ssDNA/RNA exonuclease TatD</fullName>
        <ecNumber evidence="1">3.1.11.-</ecNumber>
        <ecNumber evidence="1">3.1.13.-</ecNumber>
    </recommendedName>
    <alternativeName>
        <fullName evidence="1">DNase TatD</fullName>
    </alternativeName>
</protein>
<feature type="chain" id="PRO_0000412746" description="3'-5' ssDNA/RNA exonuclease TatD">
    <location>
        <begin position="1"/>
        <end position="260"/>
    </location>
</feature>
<feature type="binding site" evidence="1">
    <location>
        <position position="92"/>
    </location>
    <ligand>
        <name>a divalent metal cation</name>
        <dbReference type="ChEBI" id="CHEBI:60240"/>
    </ligand>
</feature>
<feature type="binding site" evidence="1">
    <location>
        <position position="128"/>
    </location>
    <ligand>
        <name>a divalent metal cation</name>
        <dbReference type="ChEBI" id="CHEBI:60240"/>
    </ligand>
</feature>
<feature type="binding site" evidence="1">
    <location>
        <position position="153"/>
    </location>
    <ligand>
        <name>a divalent metal cation</name>
        <dbReference type="ChEBI" id="CHEBI:60240"/>
    </ligand>
</feature>
<evidence type="ECO:0000255" key="1">
    <source>
        <dbReference type="HAMAP-Rule" id="MF_00901"/>
    </source>
</evidence>